<name>NRDR_XANOR</name>
<evidence type="ECO:0000255" key="1">
    <source>
        <dbReference type="HAMAP-Rule" id="MF_00440"/>
    </source>
</evidence>
<evidence type="ECO:0000305" key="2"/>
<feature type="chain" id="PRO_0000230909" description="Transcriptional repressor NrdR">
    <location>
        <begin position="1"/>
        <end position="174"/>
    </location>
</feature>
<feature type="domain" description="ATP-cone" evidence="1">
    <location>
        <begin position="49"/>
        <end position="139"/>
    </location>
</feature>
<feature type="zinc finger region" evidence="1">
    <location>
        <begin position="3"/>
        <end position="34"/>
    </location>
</feature>
<gene>
    <name evidence="1" type="primary">nrdR</name>
    <name type="ordered locus">XOO3858</name>
</gene>
<comment type="function">
    <text evidence="1">Negatively regulates transcription of bacterial ribonucleotide reductase nrd genes and operons by binding to NrdR-boxes.</text>
</comment>
<comment type="cofactor">
    <cofactor evidence="1">
        <name>Zn(2+)</name>
        <dbReference type="ChEBI" id="CHEBI:29105"/>
    </cofactor>
    <text evidence="1">Binds 1 zinc ion.</text>
</comment>
<comment type="similarity">
    <text evidence="1">Belongs to the NrdR family.</text>
</comment>
<comment type="sequence caution" evidence="2">
    <conflict type="erroneous initiation">
        <sequence resource="EMBL-CDS" id="AAW77112"/>
    </conflict>
</comment>
<sequence>MHCPFCQHSDTRVIDSRVSEDGTTIRRRRECEACGERFSTLETIELKLPTVVKSDGGREAFDARKLRTSFDRALQKRPVAEEQIEAAVRSVVHQLRMSGEREVGSLRVGEYVMVELRKLDHVGYVRFASVYRSFQDVADFREEIEKLERELPVGSEQLPLLEVALERAGKPGKR</sequence>
<accession>Q5GW09</accession>
<organism>
    <name type="scientific">Xanthomonas oryzae pv. oryzae (strain KACC10331 / KXO85)</name>
    <dbReference type="NCBI Taxonomy" id="291331"/>
    <lineage>
        <taxon>Bacteria</taxon>
        <taxon>Pseudomonadati</taxon>
        <taxon>Pseudomonadota</taxon>
        <taxon>Gammaproteobacteria</taxon>
        <taxon>Lysobacterales</taxon>
        <taxon>Lysobacteraceae</taxon>
        <taxon>Xanthomonas</taxon>
    </lineage>
</organism>
<keyword id="KW-0067">ATP-binding</keyword>
<keyword id="KW-0238">DNA-binding</keyword>
<keyword id="KW-0479">Metal-binding</keyword>
<keyword id="KW-0547">Nucleotide-binding</keyword>
<keyword id="KW-1185">Reference proteome</keyword>
<keyword id="KW-0678">Repressor</keyword>
<keyword id="KW-0804">Transcription</keyword>
<keyword id="KW-0805">Transcription regulation</keyword>
<keyword id="KW-0862">Zinc</keyword>
<keyword id="KW-0863">Zinc-finger</keyword>
<protein>
    <recommendedName>
        <fullName evidence="1">Transcriptional repressor NrdR</fullName>
    </recommendedName>
</protein>
<reference key="1">
    <citation type="journal article" date="2005" name="Nucleic Acids Res.">
        <title>The genome sequence of Xanthomonas oryzae pathovar oryzae KACC10331, the bacterial blight pathogen of rice.</title>
        <authorList>
            <person name="Lee B.-M."/>
            <person name="Park Y.-J."/>
            <person name="Park D.-S."/>
            <person name="Kang H.-W."/>
            <person name="Kim J.-G."/>
            <person name="Song E.-S."/>
            <person name="Park I.-C."/>
            <person name="Yoon U.-H."/>
            <person name="Hahn J.-H."/>
            <person name="Koo B.-S."/>
            <person name="Lee G.-B."/>
            <person name="Kim H."/>
            <person name="Park H.-S."/>
            <person name="Yoon K.-O."/>
            <person name="Kim J.-H."/>
            <person name="Jung C.-H."/>
            <person name="Koh N.-H."/>
            <person name="Seo J.-S."/>
            <person name="Go S.-J."/>
        </authorList>
    </citation>
    <scope>NUCLEOTIDE SEQUENCE [LARGE SCALE GENOMIC DNA]</scope>
    <source>
        <strain>KACC10331 / KXO85</strain>
    </source>
</reference>
<dbReference type="EMBL" id="AE013598">
    <property type="protein sequence ID" value="AAW77112.1"/>
    <property type="status" value="ALT_INIT"/>
    <property type="molecule type" value="Genomic_DNA"/>
</dbReference>
<dbReference type="SMR" id="Q5GW09"/>
<dbReference type="STRING" id="291331.XOO3858"/>
<dbReference type="KEGG" id="xoo:XOO3858"/>
<dbReference type="PATRIC" id="fig|291331.8.peg.4266"/>
<dbReference type="HOGENOM" id="CLU_108412_0_1_6"/>
<dbReference type="Proteomes" id="UP000006735">
    <property type="component" value="Chromosome"/>
</dbReference>
<dbReference type="GO" id="GO:0005524">
    <property type="term" value="F:ATP binding"/>
    <property type="evidence" value="ECO:0007669"/>
    <property type="project" value="UniProtKB-KW"/>
</dbReference>
<dbReference type="GO" id="GO:0003677">
    <property type="term" value="F:DNA binding"/>
    <property type="evidence" value="ECO:0007669"/>
    <property type="project" value="UniProtKB-KW"/>
</dbReference>
<dbReference type="GO" id="GO:0008270">
    <property type="term" value="F:zinc ion binding"/>
    <property type="evidence" value="ECO:0007669"/>
    <property type="project" value="UniProtKB-UniRule"/>
</dbReference>
<dbReference type="GO" id="GO:0045892">
    <property type="term" value="P:negative regulation of DNA-templated transcription"/>
    <property type="evidence" value="ECO:0007669"/>
    <property type="project" value="UniProtKB-UniRule"/>
</dbReference>
<dbReference type="HAMAP" id="MF_00440">
    <property type="entry name" value="NrdR"/>
    <property type="match status" value="1"/>
</dbReference>
<dbReference type="InterPro" id="IPR005144">
    <property type="entry name" value="ATP-cone_dom"/>
</dbReference>
<dbReference type="InterPro" id="IPR055173">
    <property type="entry name" value="NrdR-like_N"/>
</dbReference>
<dbReference type="InterPro" id="IPR003796">
    <property type="entry name" value="RNR_NrdR-like"/>
</dbReference>
<dbReference type="NCBIfam" id="TIGR00244">
    <property type="entry name" value="transcriptional regulator NrdR"/>
    <property type="match status" value="1"/>
</dbReference>
<dbReference type="PANTHER" id="PTHR30455">
    <property type="entry name" value="TRANSCRIPTIONAL REPRESSOR NRDR"/>
    <property type="match status" value="1"/>
</dbReference>
<dbReference type="PANTHER" id="PTHR30455:SF2">
    <property type="entry name" value="TRANSCRIPTIONAL REPRESSOR NRDR"/>
    <property type="match status" value="1"/>
</dbReference>
<dbReference type="Pfam" id="PF03477">
    <property type="entry name" value="ATP-cone"/>
    <property type="match status" value="1"/>
</dbReference>
<dbReference type="Pfam" id="PF22811">
    <property type="entry name" value="Zn_ribbon_NrdR"/>
    <property type="match status" value="1"/>
</dbReference>
<dbReference type="PROSITE" id="PS51161">
    <property type="entry name" value="ATP_CONE"/>
    <property type="match status" value="1"/>
</dbReference>
<proteinExistence type="inferred from homology"/>